<feature type="signal peptide" evidence="1">
    <location>
        <begin position="1"/>
        <end position="17"/>
    </location>
</feature>
<feature type="chain" id="PRO_0000021519" description="Protein IpgF">
    <location>
        <begin position="18"/>
        <end position="152"/>
    </location>
</feature>
<proteinExistence type="inferred from homology"/>
<keyword id="KW-0614">Plasmid</keyword>
<keyword id="KW-0732">Signal</keyword>
<keyword id="KW-0843">Virulence</keyword>
<name>IPGF_SHISO</name>
<geneLocation type="plasmid">
    <name>pINV</name>
</geneLocation>
<gene>
    <name type="primary">ipgF</name>
</gene>
<organism>
    <name type="scientific">Shigella sonnei</name>
    <dbReference type="NCBI Taxonomy" id="624"/>
    <lineage>
        <taxon>Bacteria</taxon>
        <taxon>Pseudomonadati</taxon>
        <taxon>Pseudomonadota</taxon>
        <taxon>Gammaproteobacteria</taxon>
        <taxon>Enterobacterales</taxon>
        <taxon>Enterobacteriaceae</taxon>
        <taxon>Shigella</taxon>
    </lineage>
</organism>
<protein>
    <recommendedName>
        <fullName>Protein IpgF</fullName>
    </recommendedName>
</protein>
<comment type="similarity">
    <text evidence="2">Belongs to the IagB/IpgF/P19 family.</text>
</comment>
<dbReference type="EMBL" id="D50601">
    <property type="protein sequence ID" value="BAA09144.1"/>
    <property type="molecule type" value="Genomic_DNA"/>
</dbReference>
<dbReference type="RefSeq" id="WP_000086108.1">
    <property type="nucleotide sequence ID" value="NZ_CATNNN010000034.1"/>
</dbReference>
<dbReference type="SMR" id="Q55287"/>
<dbReference type="STRING" id="216599.GCA_000283715_05226"/>
<dbReference type="CAZy" id="GH23">
    <property type="family name" value="Glycoside Hydrolase Family 23"/>
</dbReference>
<dbReference type="OMA" id="EPCTSIM"/>
<dbReference type="CDD" id="cd13400">
    <property type="entry name" value="LT_IagB-like"/>
    <property type="match status" value="1"/>
</dbReference>
<dbReference type="Gene3D" id="1.10.530.10">
    <property type="match status" value="1"/>
</dbReference>
<dbReference type="InterPro" id="IPR023346">
    <property type="entry name" value="Lysozyme-like_dom_sf"/>
</dbReference>
<dbReference type="InterPro" id="IPR008258">
    <property type="entry name" value="Transglycosylase_SLT_dom_1"/>
</dbReference>
<dbReference type="Pfam" id="PF01464">
    <property type="entry name" value="SLT"/>
    <property type="match status" value="1"/>
</dbReference>
<dbReference type="SUPFAM" id="SSF53955">
    <property type="entry name" value="Lysozyme-like"/>
    <property type="match status" value="1"/>
</dbReference>
<reference key="1">
    <citation type="submission" date="1995-05" db="EMBL/GenBank/DDBJ databases">
        <title>Comparison and high conservation of nucleotide sequences of spa-mxi regions between S.sonnei and S.flexneri -- identification of a new gene coding plausible membrane protein.</title>
        <authorList>
            <person name="Arakawa E."/>
            <person name="Kato J."/>
            <person name="Ito K."/>
            <person name="Watanabe H."/>
        </authorList>
    </citation>
    <scope>NUCLEOTIDE SEQUENCE [GENOMIC DNA]</scope>
    <source>
        <strain>HW383</strain>
    </source>
</reference>
<accession>Q55287</accession>
<sequence length="152" mass="17666">MSRFVFILLCFIPYLGRADCWDKAGERYNIPSSLLKAIAEKESGFNKFAVNVNNNGSKDYGIMQINDFHSKRLREMGYSEEMLISHPCLSVHYAAKLLNEFMMMYGRGWEAVGAYNAGTSPKKKKERLKYAEDIYRRYLRIAAESKQNNRRI</sequence>
<evidence type="ECO:0000255" key="1"/>
<evidence type="ECO:0000305" key="2"/>